<gene>
    <name type="ordered locus">YBR138C</name>
    <name type="ORF">YBR1014</name>
</gene>
<evidence type="ECO:0000256" key="1">
    <source>
        <dbReference type="SAM" id="MobiDB-lite"/>
    </source>
</evidence>
<evidence type="ECO:0000269" key="2">
    <source>
    </source>
</evidence>
<evidence type="ECO:0000269" key="3">
    <source>
    </source>
</evidence>
<evidence type="ECO:0000305" key="4"/>
<comment type="subcellular location">
    <subcellularLocation>
        <location evidence="2">Cytoplasm</location>
    </subcellularLocation>
</comment>
<comment type="miscellaneous">
    <text evidence="3">Present with 195 molecules/cell in log phase SD medium.</text>
</comment>
<name>YBY8_YEAST</name>
<keyword id="KW-0963">Cytoplasm</keyword>
<keyword id="KW-1185">Reference proteome</keyword>
<feature type="chain" id="PRO_0000202493" description="Uncharacterized protein YBR138C">
    <location>
        <begin position="1"/>
        <end position="524"/>
    </location>
</feature>
<feature type="region of interest" description="Disordered" evidence="1">
    <location>
        <begin position="83"/>
        <end position="108"/>
    </location>
</feature>
<feature type="region of interest" description="Disordered" evidence="1">
    <location>
        <begin position="155"/>
        <end position="179"/>
    </location>
</feature>
<feature type="compositionally biased region" description="Polar residues" evidence="1">
    <location>
        <begin position="83"/>
        <end position="101"/>
    </location>
</feature>
<feature type="sequence conflict" description="In Ref. 1; CAA53496 and 2; CAA85096." evidence="4" ref="1 2">
    <original>L</original>
    <variation>C</variation>
    <location>
        <position position="122"/>
    </location>
</feature>
<accession>P38277</accession>
<accession>D6VQD4</accession>
<proteinExistence type="evidence at protein level"/>
<reference key="1">
    <citation type="journal article" date="1994" name="Yeast">
        <title>The sequence of 29.7 kb from the right arm of chromosome II reveals 13 complete open reading frames, of which ten correspond to new genes.</title>
        <authorList>
            <person name="Becam A.-M."/>
            <person name="Cullin C."/>
            <person name="Grzybowska E."/>
            <person name="Lacroute F."/>
            <person name="Nasr F."/>
            <person name="Ozier-Kalogeropoulos O."/>
            <person name="Palucha A."/>
            <person name="Slonimski P.P."/>
            <person name="Zagulski M."/>
            <person name="Herbert C.J."/>
        </authorList>
    </citation>
    <scope>NUCLEOTIDE SEQUENCE [GENOMIC DNA]</scope>
    <source>
        <strain>ATCC 204508 / S288c</strain>
    </source>
</reference>
<reference key="2">
    <citation type="journal article" date="1994" name="EMBO J.">
        <title>Complete DNA sequence of yeast chromosome II.</title>
        <authorList>
            <person name="Feldmann H."/>
            <person name="Aigle M."/>
            <person name="Aljinovic G."/>
            <person name="Andre B."/>
            <person name="Baclet M.C."/>
            <person name="Barthe C."/>
            <person name="Baur A."/>
            <person name="Becam A.-M."/>
            <person name="Biteau N."/>
            <person name="Boles E."/>
            <person name="Brandt T."/>
            <person name="Brendel M."/>
            <person name="Brueckner M."/>
            <person name="Bussereau F."/>
            <person name="Christiansen C."/>
            <person name="Contreras R."/>
            <person name="Crouzet M."/>
            <person name="Cziepluch C."/>
            <person name="Demolis N."/>
            <person name="Delaveau T."/>
            <person name="Doignon F."/>
            <person name="Domdey H."/>
            <person name="Duesterhus S."/>
            <person name="Dubois E."/>
            <person name="Dujon B."/>
            <person name="El Bakkoury M."/>
            <person name="Entian K.-D."/>
            <person name="Feuermann M."/>
            <person name="Fiers W."/>
            <person name="Fobo G.M."/>
            <person name="Fritz C."/>
            <person name="Gassenhuber J."/>
            <person name="Glansdorff N."/>
            <person name="Goffeau A."/>
            <person name="Grivell L.A."/>
            <person name="de Haan M."/>
            <person name="Hein C."/>
            <person name="Herbert C.J."/>
            <person name="Hollenberg C.P."/>
            <person name="Holmstroem K."/>
            <person name="Jacq C."/>
            <person name="Jacquet M."/>
            <person name="Jauniaux J.-C."/>
            <person name="Jonniaux J.-L."/>
            <person name="Kallesoee T."/>
            <person name="Kiesau P."/>
            <person name="Kirchrath L."/>
            <person name="Koetter P."/>
            <person name="Korol S."/>
            <person name="Liebl S."/>
            <person name="Logghe M."/>
            <person name="Lohan A.J.E."/>
            <person name="Louis E.J."/>
            <person name="Li Z.Y."/>
            <person name="Maat M.J."/>
            <person name="Mallet L."/>
            <person name="Mannhaupt G."/>
            <person name="Messenguy F."/>
            <person name="Miosga T."/>
            <person name="Molemans F."/>
            <person name="Mueller S."/>
            <person name="Nasr F."/>
            <person name="Obermaier B."/>
            <person name="Perea J."/>
            <person name="Pierard A."/>
            <person name="Piravandi E."/>
            <person name="Pohl F.M."/>
            <person name="Pohl T.M."/>
            <person name="Potier S."/>
            <person name="Proft M."/>
            <person name="Purnelle B."/>
            <person name="Ramezani Rad M."/>
            <person name="Rieger M."/>
            <person name="Rose M."/>
            <person name="Schaaff-Gerstenschlaeger I."/>
            <person name="Scherens B."/>
            <person name="Schwarzlose C."/>
            <person name="Skala J."/>
            <person name="Slonimski P.P."/>
            <person name="Smits P.H.M."/>
            <person name="Souciet J.-L."/>
            <person name="Steensma H.Y."/>
            <person name="Stucka R."/>
            <person name="Urrestarazu L.A."/>
            <person name="van der Aart Q.J.M."/>
            <person name="Van Dyck L."/>
            <person name="Vassarotti A."/>
            <person name="Vetter I."/>
            <person name="Vierendeels F."/>
            <person name="Vissers S."/>
            <person name="Wagner G."/>
            <person name="de Wergifosse P."/>
            <person name="Wolfe K.H."/>
            <person name="Zagulski M."/>
            <person name="Zimmermann F.K."/>
            <person name="Mewes H.-W."/>
            <person name="Kleine K."/>
        </authorList>
    </citation>
    <scope>NUCLEOTIDE SEQUENCE [LARGE SCALE GENOMIC DNA]</scope>
    <source>
        <strain>ATCC 204508 / S288c</strain>
    </source>
</reference>
<reference key="3">
    <citation type="journal article" date="2014" name="G3 (Bethesda)">
        <title>The reference genome sequence of Saccharomyces cerevisiae: Then and now.</title>
        <authorList>
            <person name="Engel S.R."/>
            <person name="Dietrich F.S."/>
            <person name="Fisk D.G."/>
            <person name="Binkley G."/>
            <person name="Balakrishnan R."/>
            <person name="Costanzo M.C."/>
            <person name="Dwight S.S."/>
            <person name="Hitz B.C."/>
            <person name="Karra K."/>
            <person name="Nash R.S."/>
            <person name="Weng S."/>
            <person name="Wong E.D."/>
            <person name="Lloyd P."/>
            <person name="Skrzypek M.S."/>
            <person name="Miyasato S.R."/>
            <person name="Simison M."/>
            <person name="Cherry J.M."/>
        </authorList>
    </citation>
    <scope>GENOME REANNOTATION</scope>
    <scope>SEQUENCE REVISION TO 122</scope>
    <source>
        <strain>ATCC 204508 / S288c</strain>
    </source>
</reference>
<reference key="4">
    <citation type="journal article" date="2003" name="Nature">
        <title>Global analysis of protein localization in budding yeast.</title>
        <authorList>
            <person name="Huh W.-K."/>
            <person name="Falvo J.V."/>
            <person name="Gerke L.C."/>
            <person name="Carroll A.S."/>
            <person name="Howson R.W."/>
            <person name="Weissman J.S."/>
            <person name="O'Shea E.K."/>
        </authorList>
    </citation>
    <scope>SUBCELLULAR LOCATION [LARGE SCALE ANALYSIS]</scope>
</reference>
<reference key="5">
    <citation type="journal article" date="2003" name="Nature">
        <title>Global analysis of protein expression in yeast.</title>
        <authorList>
            <person name="Ghaemmaghami S."/>
            <person name="Huh W.-K."/>
            <person name="Bower K."/>
            <person name="Howson R.W."/>
            <person name="Belle A."/>
            <person name="Dephoure N."/>
            <person name="O'Shea E.K."/>
            <person name="Weissman J.S."/>
        </authorList>
    </citation>
    <scope>LEVEL OF PROTEIN EXPRESSION [LARGE SCALE ANALYSIS]</scope>
</reference>
<organism>
    <name type="scientific">Saccharomyces cerevisiae (strain ATCC 204508 / S288c)</name>
    <name type="common">Baker's yeast</name>
    <dbReference type="NCBI Taxonomy" id="559292"/>
    <lineage>
        <taxon>Eukaryota</taxon>
        <taxon>Fungi</taxon>
        <taxon>Dikarya</taxon>
        <taxon>Ascomycota</taxon>
        <taxon>Saccharomycotina</taxon>
        <taxon>Saccharomycetes</taxon>
        <taxon>Saccharomycetales</taxon>
        <taxon>Saccharomycetaceae</taxon>
        <taxon>Saccharomyces</taxon>
    </lineage>
</organism>
<dbReference type="EMBL" id="X75891">
    <property type="protein sequence ID" value="CAA53496.1"/>
    <property type="molecule type" value="Genomic_DNA"/>
</dbReference>
<dbReference type="EMBL" id="Z36007">
    <property type="protein sequence ID" value="CAA85096.1"/>
    <property type="molecule type" value="Genomic_DNA"/>
</dbReference>
<dbReference type="EMBL" id="BK006936">
    <property type="protein sequence ID" value="DAA07254.2"/>
    <property type="molecule type" value="Genomic_DNA"/>
</dbReference>
<dbReference type="PIR" id="S46007">
    <property type="entry name" value="S46007"/>
</dbReference>
<dbReference type="RefSeq" id="NP_009696.2">
    <property type="nucleotide sequence ID" value="NM_001178486.2"/>
</dbReference>
<dbReference type="SMR" id="P38277"/>
<dbReference type="BioGRID" id="32838">
    <property type="interactions" value="44"/>
</dbReference>
<dbReference type="DIP" id="DIP-1440N"/>
<dbReference type="FunCoup" id="P38277">
    <property type="interactions" value="50"/>
</dbReference>
<dbReference type="IntAct" id="P38277">
    <property type="interactions" value="9"/>
</dbReference>
<dbReference type="MINT" id="P38277"/>
<dbReference type="STRING" id="4932.YBR138C"/>
<dbReference type="iPTMnet" id="P38277"/>
<dbReference type="PaxDb" id="4932-YBR138C"/>
<dbReference type="PeptideAtlas" id="P38277"/>
<dbReference type="EnsemblFungi" id="YBR138C_mRNA">
    <property type="protein sequence ID" value="YBR138C"/>
    <property type="gene ID" value="YBR138C"/>
</dbReference>
<dbReference type="GeneID" id="852435"/>
<dbReference type="KEGG" id="sce:YBR138C"/>
<dbReference type="AGR" id="SGD:S000000342"/>
<dbReference type="SGD" id="S000000342">
    <property type="gene designation" value="YBR138C"/>
</dbReference>
<dbReference type="VEuPathDB" id="FungiDB:YBR138C"/>
<dbReference type="eggNOG" id="ENOG502QW4R">
    <property type="taxonomic scope" value="Eukaryota"/>
</dbReference>
<dbReference type="HOGENOM" id="CLU_038590_0_0_1"/>
<dbReference type="InParanoid" id="P38277"/>
<dbReference type="OMA" id="RKCVICE"/>
<dbReference type="OrthoDB" id="4076003at2759"/>
<dbReference type="BioCyc" id="YEAST:G3O-29092-MONOMER"/>
<dbReference type="BioGRID-ORCS" id="852435">
    <property type="hits" value="1 hit in 10 CRISPR screens"/>
</dbReference>
<dbReference type="PRO" id="PR:P38277"/>
<dbReference type="Proteomes" id="UP000002311">
    <property type="component" value="Chromosome II"/>
</dbReference>
<dbReference type="RNAct" id="P38277">
    <property type="molecule type" value="protein"/>
</dbReference>
<dbReference type="GO" id="GO:0005737">
    <property type="term" value="C:cytoplasm"/>
    <property type="evidence" value="ECO:0007005"/>
    <property type="project" value="SGD"/>
</dbReference>
<protein>
    <recommendedName>
        <fullName>Uncharacterized protein YBR138C</fullName>
    </recommendedName>
</protein>
<sequence>MEKDQIQPRVLESVDTNSLSLLSSNTSSNMNSNTNNKLSIIASDISTGSVLSRPLTPPVVQDIENNSMLQWQFEKKEFIFDSNSTPSKQAKPLQRNSPYQGNSQSENQNQQLLNVRKRRSQLIGAKPKIPSKLYQSVSKLDLIDDKSFTSLPIAPPCNIETNEDDSGNNEYNNNKKRPRLNPVNELRVHNNKRNRYVSYGPSLDTKNYELTENTSQDIPPLVLVEDYIPYTQSKSTKKMVSISDLKSKLSKRRDNHIPLRVKNSYSEINKETNRNSFEPNSLTLIPHILRNTEENRDESNNPLDFIKEEIEISDISIPNSIENMVVNLVNIPSSNKSYDDLYLSELNVHSQLRKCVICEKALYEISSRLLNSGYYKEIVCEQCTVRYEEAAKIFENCEFESSMDESNLSSGTFSDLENSAEPFHLSTDVPKKINRHIEDNKIDLKKEISKKKDSFSKELIERLQLQLLENDKSIKHHFNKDAMGSKSMNWFLEARRKLKWKWRINGLLPHFLRNQNSDRLNFQP</sequence>